<dbReference type="EC" id="6.3.4.20" evidence="1"/>
<dbReference type="EMBL" id="CP000908">
    <property type="protein sequence ID" value="ABY29628.1"/>
    <property type="molecule type" value="Genomic_DNA"/>
</dbReference>
<dbReference type="RefSeq" id="WP_012252874.1">
    <property type="nucleotide sequence ID" value="NC_010172.1"/>
</dbReference>
<dbReference type="SMR" id="A9W222"/>
<dbReference type="KEGG" id="mex:Mext_1226"/>
<dbReference type="eggNOG" id="COG0603">
    <property type="taxonomic scope" value="Bacteria"/>
</dbReference>
<dbReference type="HOGENOM" id="CLU_081854_0_0_5"/>
<dbReference type="BioCyc" id="MEXT419610:MEXT_RS06170-MONOMER"/>
<dbReference type="UniPathway" id="UPA00391"/>
<dbReference type="GO" id="GO:0005524">
    <property type="term" value="F:ATP binding"/>
    <property type="evidence" value="ECO:0007669"/>
    <property type="project" value="UniProtKB-UniRule"/>
</dbReference>
<dbReference type="GO" id="GO:0016879">
    <property type="term" value="F:ligase activity, forming carbon-nitrogen bonds"/>
    <property type="evidence" value="ECO:0007669"/>
    <property type="project" value="UniProtKB-UniRule"/>
</dbReference>
<dbReference type="GO" id="GO:0008270">
    <property type="term" value="F:zinc ion binding"/>
    <property type="evidence" value="ECO:0007669"/>
    <property type="project" value="UniProtKB-UniRule"/>
</dbReference>
<dbReference type="GO" id="GO:0008616">
    <property type="term" value="P:queuosine biosynthetic process"/>
    <property type="evidence" value="ECO:0007669"/>
    <property type="project" value="UniProtKB-UniRule"/>
</dbReference>
<dbReference type="CDD" id="cd01995">
    <property type="entry name" value="QueC-like"/>
    <property type="match status" value="1"/>
</dbReference>
<dbReference type="Gene3D" id="3.40.50.620">
    <property type="entry name" value="HUPs"/>
    <property type="match status" value="1"/>
</dbReference>
<dbReference type="HAMAP" id="MF_01633">
    <property type="entry name" value="QueC"/>
    <property type="match status" value="1"/>
</dbReference>
<dbReference type="InterPro" id="IPR018317">
    <property type="entry name" value="QueC"/>
</dbReference>
<dbReference type="InterPro" id="IPR014729">
    <property type="entry name" value="Rossmann-like_a/b/a_fold"/>
</dbReference>
<dbReference type="NCBIfam" id="TIGR00364">
    <property type="entry name" value="7-cyano-7-deazaguanine synthase QueC"/>
    <property type="match status" value="1"/>
</dbReference>
<dbReference type="PANTHER" id="PTHR42914">
    <property type="entry name" value="7-CYANO-7-DEAZAGUANINE SYNTHASE"/>
    <property type="match status" value="1"/>
</dbReference>
<dbReference type="PANTHER" id="PTHR42914:SF1">
    <property type="entry name" value="7-CYANO-7-DEAZAGUANINE SYNTHASE"/>
    <property type="match status" value="1"/>
</dbReference>
<dbReference type="Pfam" id="PF06508">
    <property type="entry name" value="QueC"/>
    <property type="match status" value="1"/>
</dbReference>
<dbReference type="PIRSF" id="PIRSF006293">
    <property type="entry name" value="ExsB"/>
    <property type="match status" value="1"/>
</dbReference>
<dbReference type="SUPFAM" id="SSF52402">
    <property type="entry name" value="Adenine nucleotide alpha hydrolases-like"/>
    <property type="match status" value="1"/>
</dbReference>
<feature type="chain" id="PRO_1000215795" description="7-cyano-7-deazaguanine synthase">
    <location>
        <begin position="1"/>
        <end position="243"/>
    </location>
</feature>
<feature type="binding site" evidence="1">
    <location>
        <begin position="18"/>
        <end position="28"/>
    </location>
    <ligand>
        <name>ATP</name>
        <dbReference type="ChEBI" id="CHEBI:30616"/>
    </ligand>
</feature>
<feature type="binding site" evidence="1">
    <location>
        <position position="206"/>
    </location>
    <ligand>
        <name>Zn(2+)</name>
        <dbReference type="ChEBI" id="CHEBI:29105"/>
    </ligand>
</feature>
<feature type="binding site" evidence="1">
    <location>
        <position position="221"/>
    </location>
    <ligand>
        <name>Zn(2+)</name>
        <dbReference type="ChEBI" id="CHEBI:29105"/>
    </ligand>
</feature>
<feature type="binding site" evidence="1">
    <location>
        <position position="224"/>
    </location>
    <ligand>
        <name>Zn(2+)</name>
        <dbReference type="ChEBI" id="CHEBI:29105"/>
    </ligand>
</feature>
<feature type="binding site" evidence="1">
    <location>
        <position position="227"/>
    </location>
    <ligand>
        <name>Zn(2+)</name>
        <dbReference type="ChEBI" id="CHEBI:29105"/>
    </ligand>
</feature>
<name>QUEC_METEP</name>
<evidence type="ECO:0000255" key="1">
    <source>
        <dbReference type="HAMAP-Rule" id="MF_01633"/>
    </source>
</evidence>
<reference key="1">
    <citation type="submission" date="2007-12" db="EMBL/GenBank/DDBJ databases">
        <title>Complete sequence of Methylobacterium extorquens PA1.</title>
        <authorList>
            <consortium name="US DOE Joint Genome Institute"/>
            <person name="Copeland A."/>
            <person name="Lucas S."/>
            <person name="Lapidus A."/>
            <person name="Barry K."/>
            <person name="Glavina del Rio T."/>
            <person name="Dalin E."/>
            <person name="Tice H."/>
            <person name="Pitluck S."/>
            <person name="Saunders E."/>
            <person name="Brettin T."/>
            <person name="Bruce D."/>
            <person name="Detter J.C."/>
            <person name="Han C."/>
            <person name="Schmutz J."/>
            <person name="Larimer F."/>
            <person name="Land M."/>
            <person name="Hauser L."/>
            <person name="Kyrpides N."/>
            <person name="Kim E."/>
            <person name="Marx C."/>
            <person name="Richardson P."/>
        </authorList>
    </citation>
    <scope>NUCLEOTIDE SEQUENCE [LARGE SCALE GENOMIC DNA]</scope>
    <source>
        <strain>PA1</strain>
    </source>
</reference>
<organism>
    <name type="scientific">Methylorubrum extorquens (strain PA1)</name>
    <name type="common">Methylobacterium extorquens</name>
    <dbReference type="NCBI Taxonomy" id="419610"/>
    <lineage>
        <taxon>Bacteria</taxon>
        <taxon>Pseudomonadati</taxon>
        <taxon>Pseudomonadota</taxon>
        <taxon>Alphaproteobacteria</taxon>
        <taxon>Hyphomicrobiales</taxon>
        <taxon>Methylobacteriaceae</taxon>
        <taxon>Methylorubrum</taxon>
    </lineage>
</organism>
<proteinExistence type="inferred from homology"/>
<comment type="function">
    <text evidence="1">Catalyzes the ATP-dependent conversion of 7-carboxy-7-deazaguanine (CDG) to 7-cyano-7-deazaguanine (preQ(0)).</text>
</comment>
<comment type="catalytic activity">
    <reaction evidence="1">
        <text>7-carboxy-7-deazaguanine + NH4(+) + ATP = 7-cyano-7-deazaguanine + ADP + phosphate + H2O + H(+)</text>
        <dbReference type="Rhea" id="RHEA:27982"/>
        <dbReference type="ChEBI" id="CHEBI:15377"/>
        <dbReference type="ChEBI" id="CHEBI:15378"/>
        <dbReference type="ChEBI" id="CHEBI:28938"/>
        <dbReference type="ChEBI" id="CHEBI:30616"/>
        <dbReference type="ChEBI" id="CHEBI:43474"/>
        <dbReference type="ChEBI" id="CHEBI:45075"/>
        <dbReference type="ChEBI" id="CHEBI:61036"/>
        <dbReference type="ChEBI" id="CHEBI:456216"/>
        <dbReference type="EC" id="6.3.4.20"/>
    </reaction>
</comment>
<comment type="cofactor">
    <cofactor evidence="1">
        <name>Zn(2+)</name>
        <dbReference type="ChEBI" id="CHEBI:29105"/>
    </cofactor>
    <text evidence="1">Binds 1 zinc ion per subunit.</text>
</comment>
<comment type="pathway">
    <text evidence="1">Purine metabolism; 7-cyano-7-deazaguanine biosynthesis.</text>
</comment>
<comment type="similarity">
    <text evidence="1">Belongs to the QueC family.</text>
</comment>
<accession>A9W222</accession>
<sequence length="243" mass="26454">MPEDAAVAGGETGALVLFSGGQDSATCLAWALDRFPHVETLGFDYGQRHRVELDRRAALRQGLTALDPAWGRRLGPDHTLALAALGEISDTALTRDSAIAFARDGLPNTFVPGRNLAFLTFAAALAYRRGLRHIVGGMCETDYSGYPDCRDDTIKALQVALNLGMERRFVLHTPLMWIDKAQTWALAETLGGRALVDLVVEESHTCYLGERGARHEWGYGCGTCPACDLRAKGFSRYLAARAE</sequence>
<gene>
    <name evidence="1" type="primary">queC</name>
    <name type="ordered locus">Mext_1226</name>
</gene>
<protein>
    <recommendedName>
        <fullName evidence="1">7-cyano-7-deazaguanine synthase</fullName>
        <ecNumber evidence="1">6.3.4.20</ecNumber>
    </recommendedName>
    <alternativeName>
        <fullName evidence="1">7-cyano-7-carbaguanine synthase</fullName>
    </alternativeName>
    <alternativeName>
        <fullName evidence="1">PreQ(0) synthase</fullName>
    </alternativeName>
    <alternativeName>
        <fullName evidence="1">Queuosine biosynthesis protein QueC</fullName>
    </alternativeName>
</protein>
<keyword id="KW-0067">ATP-binding</keyword>
<keyword id="KW-0436">Ligase</keyword>
<keyword id="KW-0479">Metal-binding</keyword>
<keyword id="KW-0547">Nucleotide-binding</keyword>
<keyword id="KW-0671">Queuosine biosynthesis</keyword>
<keyword id="KW-0862">Zinc</keyword>